<keyword id="KW-1185">Reference proteome</keyword>
<keyword id="KW-0687">Ribonucleoprotein</keyword>
<keyword id="KW-0689">Ribosomal protein</keyword>
<keyword id="KW-0694">RNA-binding</keyword>
<keyword id="KW-0699">rRNA-binding</keyword>
<comment type="function">
    <text evidence="1">Binds the lower part of the 30S subunit head. Binds mRNA in the 70S ribosome, positioning it for translation (By similarity).</text>
</comment>
<comment type="subunit">
    <text evidence="1">Part of the 30S ribosomal subunit. Forms a tight complex with proteins S10 and S14. Some nascent polypeptide chains are able to cross-link to this protein in situ (By similarity).</text>
</comment>
<comment type="similarity">
    <text evidence="2">Belongs to the universal ribosomal protein uS3 family.</text>
</comment>
<reference key="1">
    <citation type="journal article" date="2002" name="Proc. Natl. Acad. Sci. U.S.A.">
        <title>Extensive mosaic structure revealed by the complete genome sequence of uropathogenic Escherichia coli.</title>
        <authorList>
            <person name="Welch R.A."/>
            <person name="Burland V."/>
            <person name="Plunkett G. III"/>
            <person name="Redford P."/>
            <person name="Roesch P."/>
            <person name="Rasko D."/>
            <person name="Buckles E.L."/>
            <person name="Liou S.-R."/>
            <person name="Boutin A."/>
            <person name="Hackett J."/>
            <person name="Stroud D."/>
            <person name="Mayhew G.F."/>
            <person name="Rose D.J."/>
            <person name="Zhou S."/>
            <person name="Schwartz D.C."/>
            <person name="Perna N.T."/>
            <person name="Mobley H.L.T."/>
            <person name="Donnenberg M.S."/>
            <person name="Blattner F.R."/>
        </authorList>
    </citation>
    <scope>NUCLEOTIDE SEQUENCE [LARGE SCALE GENOMIC DNA]</scope>
    <source>
        <strain>CFT073 / ATCC 700928 / UPEC</strain>
    </source>
</reference>
<name>RS3_ECOL6</name>
<dbReference type="EMBL" id="AE014075">
    <property type="protein sequence ID" value="AAN82518.1"/>
    <property type="molecule type" value="Genomic_DNA"/>
</dbReference>
<dbReference type="RefSeq" id="WP_000529945.1">
    <property type="nucleotide sequence ID" value="NZ_CP051263.1"/>
</dbReference>
<dbReference type="SMR" id="P0A7V4"/>
<dbReference type="STRING" id="199310.c4080"/>
<dbReference type="GeneID" id="97603663"/>
<dbReference type="KEGG" id="ecc:c4080"/>
<dbReference type="eggNOG" id="COG0092">
    <property type="taxonomic scope" value="Bacteria"/>
</dbReference>
<dbReference type="HOGENOM" id="CLU_058591_0_2_6"/>
<dbReference type="BioCyc" id="ECOL199310:C4080-MONOMER"/>
<dbReference type="Proteomes" id="UP000001410">
    <property type="component" value="Chromosome"/>
</dbReference>
<dbReference type="GO" id="GO:0022627">
    <property type="term" value="C:cytosolic small ribosomal subunit"/>
    <property type="evidence" value="ECO:0007669"/>
    <property type="project" value="TreeGrafter"/>
</dbReference>
<dbReference type="GO" id="GO:0003729">
    <property type="term" value="F:mRNA binding"/>
    <property type="evidence" value="ECO:0007669"/>
    <property type="project" value="UniProtKB-UniRule"/>
</dbReference>
<dbReference type="GO" id="GO:0019843">
    <property type="term" value="F:rRNA binding"/>
    <property type="evidence" value="ECO:0007669"/>
    <property type="project" value="UniProtKB-UniRule"/>
</dbReference>
<dbReference type="GO" id="GO:0003735">
    <property type="term" value="F:structural constituent of ribosome"/>
    <property type="evidence" value="ECO:0007669"/>
    <property type="project" value="InterPro"/>
</dbReference>
<dbReference type="GO" id="GO:0006412">
    <property type="term" value="P:translation"/>
    <property type="evidence" value="ECO:0007669"/>
    <property type="project" value="UniProtKB-UniRule"/>
</dbReference>
<dbReference type="CDD" id="cd02412">
    <property type="entry name" value="KH-II_30S_S3"/>
    <property type="match status" value="1"/>
</dbReference>
<dbReference type="FunFam" id="3.30.1140.32:FF:000001">
    <property type="entry name" value="30S ribosomal protein S3"/>
    <property type="match status" value="1"/>
</dbReference>
<dbReference type="FunFam" id="3.30.300.20:FF:000001">
    <property type="entry name" value="30S ribosomal protein S3"/>
    <property type="match status" value="1"/>
</dbReference>
<dbReference type="Gene3D" id="3.30.300.20">
    <property type="match status" value="1"/>
</dbReference>
<dbReference type="Gene3D" id="3.30.1140.32">
    <property type="entry name" value="Ribosomal protein S3, C-terminal domain"/>
    <property type="match status" value="1"/>
</dbReference>
<dbReference type="HAMAP" id="MF_01309_B">
    <property type="entry name" value="Ribosomal_uS3_B"/>
    <property type="match status" value="1"/>
</dbReference>
<dbReference type="InterPro" id="IPR004087">
    <property type="entry name" value="KH_dom"/>
</dbReference>
<dbReference type="InterPro" id="IPR015946">
    <property type="entry name" value="KH_dom-like_a/b"/>
</dbReference>
<dbReference type="InterPro" id="IPR004044">
    <property type="entry name" value="KH_dom_type_2"/>
</dbReference>
<dbReference type="InterPro" id="IPR009019">
    <property type="entry name" value="KH_sf_prok-type"/>
</dbReference>
<dbReference type="InterPro" id="IPR036419">
    <property type="entry name" value="Ribosomal_S3_C_sf"/>
</dbReference>
<dbReference type="InterPro" id="IPR005704">
    <property type="entry name" value="Ribosomal_uS3_bac-typ"/>
</dbReference>
<dbReference type="InterPro" id="IPR001351">
    <property type="entry name" value="Ribosomal_uS3_C"/>
</dbReference>
<dbReference type="InterPro" id="IPR018280">
    <property type="entry name" value="Ribosomal_uS3_CS"/>
</dbReference>
<dbReference type="NCBIfam" id="TIGR01009">
    <property type="entry name" value="rpsC_bact"/>
    <property type="match status" value="1"/>
</dbReference>
<dbReference type="PANTHER" id="PTHR11760">
    <property type="entry name" value="30S/40S RIBOSOMAL PROTEIN S3"/>
    <property type="match status" value="1"/>
</dbReference>
<dbReference type="PANTHER" id="PTHR11760:SF19">
    <property type="entry name" value="SMALL RIBOSOMAL SUBUNIT PROTEIN US3C"/>
    <property type="match status" value="1"/>
</dbReference>
<dbReference type="Pfam" id="PF07650">
    <property type="entry name" value="KH_2"/>
    <property type="match status" value="1"/>
</dbReference>
<dbReference type="Pfam" id="PF00189">
    <property type="entry name" value="Ribosomal_S3_C"/>
    <property type="match status" value="1"/>
</dbReference>
<dbReference type="SMART" id="SM00322">
    <property type="entry name" value="KH"/>
    <property type="match status" value="1"/>
</dbReference>
<dbReference type="SUPFAM" id="SSF54814">
    <property type="entry name" value="Prokaryotic type KH domain (KH-domain type II)"/>
    <property type="match status" value="1"/>
</dbReference>
<dbReference type="SUPFAM" id="SSF54821">
    <property type="entry name" value="Ribosomal protein S3 C-terminal domain"/>
    <property type="match status" value="1"/>
</dbReference>
<dbReference type="PROSITE" id="PS50823">
    <property type="entry name" value="KH_TYPE_2"/>
    <property type="match status" value="1"/>
</dbReference>
<dbReference type="PROSITE" id="PS00548">
    <property type="entry name" value="RIBOSOMAL_S3"/>
    <property type="match status" value="1"/>
</dbReference>
<organism>
    <name type="scientific">Escherichia coli O6:H1 (strain CFT073 / ATCC 700928 / UPEC)</name>
    <dbReference type="NCBI Taxonomy" id="199310"/>
    <lineage>
        <taxon>Bacteria</taxon>
        <taxon>Pseudomonadati</taxon>
        <taxon>Pseudomonadota</taxon>
        <taxon>Gammaproteobacteria</taxon>
        <taxon>Enterobacterales</taxon>
        <taxon>Enterobacteriaceae</taxon>
        <taxon>Escherichia</taxon>
    </lineage>
</organism>
<protein>
    <recommendedName>
        <fullName evidence="2">Small ribosomal subunit protein uS3</fullName>
    </recommendedName>
    <alternativeName>
        <fullName>30S ribosomal protein S3</fullName>
    </alternativeName>
</protein>
<sequence>MGQKVHPNGIRLGIVKPWNSTWFANTKEFADNLDSDFKVRQYLTKELAKASVSRIVIERPAKSIRVTIHTARPGIVIGKKGEDVEKLRKVVADIAGVPAQINIAEVRKPELDAKLVADSITSQLERRVMFRRAMKRAVQNAMRLGAKGIKVEVSGRLGGAEIARTEWYREGRVPLHTLRADIDYNTSEAHTTYGVIGVKVWIFKGEILGGMAAVEQPEKPAAQPKKQQRKGRK</sequence>
<evidence type="ECO:0000250" key="1"/>
<evidence type="ECO:0000305" key="2"/>
<accession>P0A7V4</accession>
<accession>P02352</accession>
<gene>
    <name type="primary">rpsC</name>
    <name type="ordered locus">c4080</name>
</gene>
<proteinExistence type="inferred from homology"/>
<feature type="initiator methionine" description="Removed" evidence="1">
    <location>
        <position position="1"/>
    </location>
</feature>
<feature type="chain" id="PRO_0000130114" description="Small ribosomal subunit protein uS3">
    <location>
        <begin position="2"/>
        <end position="233"/>
    </location>
</feature>
<feature type="domain" description="KH type-2">
    <location>
        <begin position="39"/>
        <end position="107"/>
    </location>
</feature>